<sequence>MEAASTWALLLALLLLLLLLSLTLFRTPARGYLPPGPTPLPLLGNLLQLRPGALYSGLLRLSKKYGPVFTVYLGPWRRVVVLVGHDAVREALGGQAEEFSGRGTLATLDKTFDGHGVFFANGERWKQLRKFTLLALRDLGMGKREGEELIQAEVQSLVEAFQKTEGRPFNPSMLLAQATSNVVCSLVFGIRLPYDDKEFQAVIQAASGTLLGISSPWGQAYEMFSWLLQPLPGPHTQLQHHLGTLAAFTIQQVQKHQGRFQTSGPARDVVDAFLLKMAQEKQDPGTEFTEKNLLMTVTYLLFAGTMTIGATIRYALLLLLRYPQVQQRVREELIQELGPGRAPSLSDRVRLPYTDAVLHEAQRLLALVPMGMPHTITRTTCFRGYTLPKGTEVFPLIGSILHDPAVFQNPGEFHPGRFLDEDGRLRKHEAFLPYSLGKRVCLGEGLARAELWLFFTSILQAFSLETPCPPGDLSLKPAISGLFNIPPDFQLRVWPTGDQSR</sequence>
<evidence type="ECO:0000250" key="1"/>
<evidence type="ECO:0000250" key="2">
    <source>
        <dbReference type="UniProtKB" id="Q96SQ9"/>
    </source>
</evidence>
<evidence type="ECO:0000305" key="3"/>
<reference key="1">
    <citation type="journal article" date="2005" name="Science">
        <title>The transcriptional landscape of the mammalian genome.</title>
        <authorList>
            <person name="Carninci P."/>
            <person name="Kasukawa T."/>
            <person name="Katayama S."/>
            <person name="Gough J."/>
            <person name="Frith M.C."/>
            <person name="Maeda N."/>
            <person name="Oyama R."/>
            <person name="Ravasi T."/>
            <person name="Lenhard B."/>
            <person name="Wells C."/>
            <person name="Kodzius R."/>
            <person name="Shimokawa K."/>
            <person name="Bajic V.B."/>
            <person name="Brenner S.E."/>
            <person name="Batalov S."/>
            <person name="Forrest A.R."/>
            <person name="Zavolan M."/>
            <person name="Davis M.J."/>
            <person name="Wilming L.G."/>
            <person name="Aidinis V."/>
            <person name="Allen J.E."/>
            <person name="Ambesi-Impiombato A."/>
            <person name="Apweiler R."/>
            <person name="Aturaliya R.N."/>
            <person name="Bailey T.L."/>
            <person name="Bansal M."/>
            <person name="Baxter L."/>
            <person name="Beisel K.W."/>
            <person name="Bersano T."/>
            <person name="Bono H."/>
            <person name="Chalk A.M."/>
            <person name="Chiu K.P."/>
            <person name="Choudhary V."/>
            <person name="Christoffels A."/>
            <person name="Clutterbuck D.R."/>
            <person name="Crowe M.L."/>
            <person name="Dalla E."/>
            <person name="Dalrymple B.P."/>
            <person name="de Bono B."/>
            <person name="Della Gatta G."/>
            <person name="di Bernardo D."/>
            <person name="Down T."/>
            <person name="Engstrom P."/>
            <person name="Fagiolini M."/>
            <person name="Faulkner G."/>
            <person name="Fletcher C.F."/>
            <person name="Fukushima T."/>
            <person name="Furuno M."/>
            <person name="Futaki S."/>
            <person name="Gariboldi M."/>
            <person name="Georgii-Hemming P."/>
            <person name="Gingeras T.R."/>
            <person name="Gojobori T."/>
            <person name="Green R.E."/>
            <person name="Gustincich S."/>
            <person name="Harbers M."/>
            <person name="Hayashi Y."/>
            <person name="Hensch T.K."/>
            <person name="Hirokawa N."/>
            <person name="Hill D."/>
            <person name="Huminiecki L."/>
            <person name="Iacono M."/>
            <person name="Ikeo K."/>
            <person name="Iwama A."/>
            <person name="Ishikawa T."/>
            <person name="Jakt M."/>
            <person name="Kanapin A."/>
            <person name="Katoh M."/>
            <person name="Kawasawa Y."/>
            <person name="Kelso J."/>
            <person name="Kitamura H."/>
            <person name="Kitano H."/>
            <person name="Kollias G."/>
            <person name="Krishnan S.P."/>
            <person name="Kruger A."/>
            <person name="Kummerfeld S.K."/>
            <person name="Kurochkin I.V."/>
            <person name="Lareau L.F."/>
            <person name="Lazarevic D."/>
            <person name="Lipovich L."/>
            <person name="Liu J."/>
            <person name="Liuni S."/>
            <person name="McWilliam S."/>
            <person name="Madan Babu M."/>
            <person name="Madera M."/>
            <person name="Marchionni L."/>
            <person name="Matsuda H."/>
            <person name="Matsuzawa S."/>
            <person name="Miki H."/>
            <person name="Mignone F."/>
            <person name="Miyake S."/>
            <person name="Morris K."/>
            <person name="Mottagui-Tabar S."/>
            <person name="Mulder N."/>
            <person name="Nakano N."/>
            <person name="Nakauchi H."/>
            <person name="Ng P."/>
            <person name="Nilsson R."/>
            <person name="Nishiguchi S."/>
            <person name="Nishikawa S."/>
            <person name="Nori F."/>
            <person name="Ohara O."/>
            <person name="Okazaki Y."/>
            <person name="Orlando V."/>
            <person name="Pang K.C."/>
            <person name="Pavan W.J."/>
            <person name="Pavesi G."/>
            <person name="Pesole G."/>
            <person name="Petrovsky N."/>
            <person name="Piazza S."/>
            <person name="Reed J."/>
            <person name="Reid J.F."/>
            <person name="Ring B.Z."/>
            <person name="Ringwald M."/>
            <person name="Rost B."/>
            <person name="Ruan Y."/>
            <person name="Salzberg S.L."/>
            <person name="Sandelin A."/>
            <person name="Schneider C."/>
            <person name="Schoenbach C."/>
            <person name="Sekiguchi K."/>
            <person name="Semple C.A."/>
            <person name="Seno S."/>
            <person name="Sessa L."/>
            <person name="Sheng Y."/>
            <person name="Shibata Y."/>
            <person name="Shimada H."/>
            <person name="Shimada K."/>
            <person name="Silva D."/>
            <person name="Sinclair B."/>
            <person name="Sperling S."/>
            <person name="Stupka E."/>
            <person name="Sugiura K."/>
            <person name="Sultana R."/>
            <person name="Takenaka Y."/>
            <person name="Taki K."/>
            <person name="Tammoja K."/>
            <person name="Tan S.L."/>
            <person name="Tang S."/>
            <person name="Taylor M.S."/>
            <person name="Tegner J."/>
            <person name="Teichmann S.A."/>
            <person name="Ueda H.R."/>
            <person name="van Nimwegen E."/>
            <person name="Verardo R."/>
            <person name="Wei C.L."/>
            <person name="Yagi K."/>
            <person name="Yamanishi H."/>
            <person name="Zabarovsky E."/>
            <person name="Zhu S."/>
            <person name="Zimmer A."/>
            <person name="Hide W."/>
            <person name="Bult C."/>
            <person name="Grimmond S.M."/>
            <person name="Teasdale R.D."/>
            <person name="Liu E.T."/>
            <person name="Brusic V."/>
            <person name="Quackenbush J."/>
            <person name="Wahlestedt C."/>
            <person name="Mattick J.S."/>
            <person name="Hume D.A."/>
            <person name="Kai C."/>
            <person name="Sasaki D."/>
            <person name="Tomaru Y."/>
            <person name="Fukuda S."/>
            <person name="Kanamori-Katayama M."/>
            <person name="Suzuki M."/>
            <person name="Aoki J."/>
            <person name="Arakawa T."/>
            <person name="Iida J."/>
            <person name="Imamura K."/>
            <person name="Itoh M."/>
            <person name="Kato T."/>
            <person name="Kawaji H."/>
            <person name="Kawagashira N."/>
            <person name="Kawashima T."/>
            <person name="Kojima M."/>
            <person name="Kondo S."/>
            <person name="Konno H."/>
            <person name="Nakano K."/>
            <person name="Ninomiya N."/>
            <person name="Nishio T."/>
            <person name="Okada M."/>
            <person name="Plessy C."/>
            <person name="Shibata K."/>
            <person name="Shiraki T."/>
            <person name="Suzuki S."/>
            <person name="Tagami M."/>
            <person name="Waki K."/>
            <person name="Watahiki A."/>
            <person name="Okamura-Oho Y."/>
            <person name="Suzuki H."/>
            <person name="Kawai J."/>
            <person name="Hayashizaki Y."/>
        </authorList>
    </citation>
    <scope>NUCLEOTIDE SEQUENCE [LARGE SCALE MRNA]</scope>
    <source>
        <strain>C57BL/6J</strain>
        <tissue>Lung</tissue>
    </source>
</reference>
<reference key="2">
    <citation type="journal article" date="2004" name="Genome Res.">
        <title>The status, quality, and expansion of the NIH full-length cDNA project: the Mammalian Gene Collection (MGC).</title>
        <authorList>
            <consortium name="The MGC Project Team"/>
        </authorList>
    </citation>
    <scope>NUCLEOTIDE SEQUENCE [LARGE SCALE MRNA]</scope>
    <source>
        <strain>C57BL/6J</strain>
        <tissue>Embryonic germ cell</tissue>
    </source>
</reference>
<reference key="3">
    <citation type="journal article" date="2010" name="Cell">
        <title>A tissue-specific atlas of mouse protein phosphorylation and expression.</title>
        <authorList>
            <person name="Huttlin E.L."/>
            <person name="Jedrychowski M.P."/>
            <person name="Elias J.E."/>
            <person name="Goswami T."/>
            <person name="Rad R."/>
            <person name="Beausoleil S.A."/>
            <person name="Villen J."/>
            <person name="Haas W."/>
            <person name="Sowa M.E."/>
            <person name="Gygi S.P."/>
        </authorList>
    </citation>
    <scope>IDENTIFICATION BY MASS SPECTROMETRY [LARGE SCALE ANALYSIS]</scope>
    <source>
        <tissue>Lung</tissue>
    </source>
</reference>
<dbReference type="EC" id="1.14.14.-" evidence="2"/>
<dbReference type="EC" id="4.2.1.152" evidence="2"/>
<dbReference type="EC" id="5.3.99.5" evidence="2"/>
<dbReference type="EMBL" id="AK004699">
    <property type="protein sequence ID" value="BAB23484.1"/>
    <property type="molecule type" value="mRNA"/>
</dbReference>
<dbReference type="EMBL" id="AK087069">
    <property type="protein sequence ID" value="BAC39794.1"/>
    <property type="molecule type" value="mRNA"/>
</dbReference>
<dbReference type="EMBL" id="BC064733">
    <property type="protein sequence ID" value="AAH64733.1"/>
    <property type="molecule type" value="mRNA"/>
</dbReference>
<dbReference type="CCDS" id="CCDS20997.1"/>
<dbReference type="RefSeq" id="NP_083051.1">
    <property type="nucleotide sequence ID" value="NM_028775.4"/>
</dbReference>
<dbReference type="SMR" id="Q9DBX6"/>
<dbReference type="FunCoup" id="Q9DBX6">
    <property type="interactions" value="315"/>
</dbReference>
<dbReference type="STRING" id="10090.ENSMUSP00000041175"/>
<dbReference type="GlyGen" id="Q9DBX6">
    <property type="glycosylation" value="1 site"/>
</dbReference>
<dbReference type="iPTMnet" id="Q9DBX6"/>
<dbReference type="PhosphoSitePlus" id="Q9DBX6"/>
<dbReference type="jPOST" id="Q9DBX6"/>
<dbReference type="PaxDb" id="10090-ENSMUSP00000041175"/>
<dbReference type="PeptideAtlas" id="Q9DBX6"/>
<dbReference type="ProteomicsDB" id="278007"/>
<dbReference type="Antibodypedia" id="45241">
    <property type="antibodies" value="207 antibodies from 29 providers"/>
</dbReference>
<dbReference type="DNASU" id="74134"/>
<dbReference type="Ensembl" id="ENSMUST00000043314.10">
    <property type="protein sequence ID" value="ENSMUSP00000041175.4"/>
    <property type="gene ID" value="ENSMUSG00000040703.12"/>
</dbReference>
<dbReference type="GeneID" id="74134"/>
<dbReference type="KEGG" id="mmu:74134"/>
<dbReference type="UCSC" id="uc009fub.1">
    <property type="organism name" value="mouse"/>
</dbReference>
<dbReference type="AGR" id="MGI:1921384"/>
<dbReference type="CTD" id="29785"/>
<dbReference type="MGI" id="MGI:1921384">
    <property type="gene designation" value="Cyp2s1"/>
</dbReference>
<dbReference type="VEuPathDB" id="HostDB:ENSMUSG00000040703"/>
<dbReference type="eggNOG" id="KOG0156">
    <property type="taxonomic scope" value="Eukaryota"/>
</dbReference>
<dbReference type="GeneTree" id="ENSGT00940000162131"/>
<dbReference type="HOGENOM" id="CLU_001570_22_3_1"/>
<dbReference type="InParanoid" id="Q9DBX6"/>
<dbReference type="OMA" id="WPVDIFP"/>
<dbReference type="OrthoDB" id="3934656at2759"/>
<dbReference type="PhylomeDB" id="Q9DBX6"/>
<dbReference type="TreeFam" id="TF352043"/>
<dbReference type="Reactome" id="R-MMU-211958">
    <property type="pathway name" value="Miscellaneous substrates"/>
</dbReference>
<dbReference type="Reactome" id="R-MMU-211981">
    <property type="pathway name" value="Xenobiotics"/>
</dbReference>
<dbReference type="Reactome" id="R-MMU-211999">
    <property type="pathway name" value="CYP2E1 reactions"/>
</dbReference>
<dbReference type="UniPathway" id="UPA00199"/>
<dbReference type="BioGRID-ORCS" id="74134">
    <property type="hits" value="3 hits in 79 CRISPR screens"/>
</dbReference>
<dbReference type="PRO" id="PR:Q9DBX6"/>
<dbReference type="Proteomes" id="UP000000589">
    <property type="component" value="Chromosome 7"/>
</dbReference>
<dbReference type="RNAct" id="Q9DBX6">
    <property type="molecule type" value="protein"/>
</dbReference>
<dbReference type="Bgee" id="ENSMUSG00000040703">
    <property type="expression patterns" value="Expressed in epithelium of stomach and 152 other cell types or tissues"/>
</dbReference>
<dbReference type="ExpressionAtlas" id="Q9DBX6">
    <property type="expression patterns" value="baseline and differential"/>
</dbReference>
<dbReference type="GO" id="GO:0005789">
    <property type="term" value="C:endoplasmic reticulum membrane"/>
    <property type="evidence" value="ECO:0007669"/>
    <property type="project" value="UniProtKB-SubCell"/>
</dbReference>
<dbReference type="GO" id="GO:0036134">
    <property type="term" value="F:12-hydroxyheptadecatrienoic acid synthase activity"/>
    <property type="evidence" value="ECO:0007669"/>
    <property type="project" value="RHEA"/>
</dbReference>
<dbReference type="GO" id="GO:0020037">
    <property type="term" value="F:heme binding"/>
    <property type="evidence" value="ECO:0007669"/>
    <property type="project" value="InterPro"/>
</dbReference>
<dbReference type="GO" id="GO:0106256">
    <property type="term" value="F:hydroperoxy icosatetraenoate dehydratase activity"/>
    <property type="evidence" value="ECO:0007669"/>
    <property type="project" value="UniProtKB-EC"/>
</dbReference>
<dbReference type="GO" id="GO:0005506">
    <property type="term" value="F:iron ion binding"/>
    <property type="evidence" value="ECO:0007669"/>
    <property type="project" value="InterPro"/>
</dbReference>
<dbReference type="GO" id="GO:0016712">
    <property type="term" value="F:oxidoreductase activity, acting on paired donors, with incorporation or reduction of molecular oxygen, reduced flavin or flavoprotein as one donor, and incorporation of one atom of oxygen"/>
    <property type="evidence" value="ECO:0007669"/>
    <property type="project" value="InterPro"/>
</dbReference>
<dbReference type="GO" id="GO:0004796">
    <property type="term" value="F:thromboxane-A synthase activity"/>
    <property type="evidence" value="ECO:0007669"/>
    <property type="project" value="UniProtKB-EC"/>
</dbReference>
<dbReference type="GO" id="GO:0006693">
    <property type="term" value="P:prostaglandin metabolic process"/>
    <property type="evidence" value="ECO:0007669"/>
    <property type="project" value="Ensembl"/>
</dbReference>
<dbReference type="GO" id="GO:0042573">
    <property type="term" value="P:retinoic acid metabolic process"/>
    <property type="evidence" value="ECO:0007669"/>
    <property type="project" value="Ensembl"/>
</dbReference>
<dbReference type="CDD" id="cd11026">
    <property type="entry name" value="CYP2"/>
    <property type="match status" value="1"/>
</dbReference>
<dbReference type="FunFam" id="1.10.630.10:FF:000238">
    <property type="entry name" value="Cytochrome P450 2A6"/>
    <property type="match status" value="1"/>
</dbReference>
<dbReference type="Gene3D" id="1.10.630.10">
    <property type="entry name" value="Cytochrome P450"/>
    <property type="match status" value="1"/>
</dbReference>
<dbReference type="InterPro" id="IPR001128">
    <property type="entry name" value="Cyt_P450"/>
</dbReference>
<dbReference type="InterPro" id="IPR002401">
    <property type="entry name" value="Cyt_P450_E_grp-I"/>
</dbReference>
<dbReference type="InterPro" id="IPR008067">
    <property type="entry name" value="Cyt_P450_E_grp-I_CYP2A-like"/>
</dbReference>
<dbReference type="InterPro" id="IPR036396">
    <property type="entry name" value="Cyt_P450_sf"/>
</dbReference>
<dbReference type="InterPro" id="IPR050182">
    <property type="entry name" value="Cytochrome_P450_fam2"/>
</dbReference>
<dbReference type="PANTHER" id="PTHR24300:SF23">
    <property type="entry name" value="CYTOCHROME P450 2S1"/>
    <property type="match status" value="1"/>
</dbReference>
<dbReference type="PANTHER" id="PTHR24300">
    <property type="entry name" value="CYTOCHROME P450 508A4-RELATED"/>
    <property type="match status" value="1"/>
</dbReference>
<dbReference type="Pfam" id="PF00067">
    <property type="entry name" value="p450"/>
    <property type="match status" value="1"/>
</dbReference>
<dbReference type="PRINTS" id="PR00463">
    <property type="entry name" value="EP450I"/>
</dbReference>
<dbReference type="PRINTS" id="PR01684">
    <property type="entry name" value="EP450ICYP2A"/>
</dbReference>
<dbReference type="PRINTS" id="PR00385">
    <property type="entry name" value="P450"/>
</dbReference>
<dbReference type="SUPFAM" id="SSF48264">
    <property type="entry name" value="Cytochrome P450"/>
    <property type="match status" value="1"/>
</dbReference>
<comment type="function">
    <text evidence="2">A cytochrome P450 monooxygenase involved in the metabolism of retinoids and eicosanoids. In epidermis, may contribute to the oxidative metabolism of all-trans-retinoic acid. For this activity, uses molecular oxygen inserting one oxygen atom into a substrate, and reducing the second into a water molecule, with two electrons provided by NADPH via cytochrome P450 reductase (NADPH--hemoprotein reductase). Additionally, displays peroxidase and isomerase activities toward various oxygenated eicosanoids such as prostaglandin H2 (PGH2) and hydroperoxyeicosatetraenoates (HPETEs). Independently of cytochrome P450 reductase, NADPH, and O2, catalyzes the breakdown of PGH2 to hydroxyheptadecatrienoic acid (HHT) and malondialdehyde (MDA), which is known to act as a mediator of DNA damage.</text>
</comment>
<comment type="catalytic activity">
    <reaction evidence="2">
        <text>all-trans-retinoate + reduced [NADPH--hemoprotein reductase] + O2 = all-trans-5,6-epoxyretinoate + oxidized [NADPH--hemoprotein reductase] + H2O + H(+)</text>
        <dbReference type="Rhea" id="RHEA:55860"/>
        <dbReference type="Rhea" id="RHEA-COMP:11964"/>
        <dbReference type="Rhea" id="RHEA-COMP:11965"/>
        <dbReference type="ChEBI" id="CHEBI:15377"/>
        <dbReference type="ChEBI" id="CHEBI:15378"/>
        <dbReference type="ChEBI" id="CHEBI:15379"/>
        <dbReference type="ChEBI" id="CHEBI:35291"/>
        <dbReference type="ChEBI" id="CHEBI:57618"/>
        <dbReference type="ChEBI" id="CHEBI:58210"/>
        <dbReference type="ChEBI" id="CHEBI:139183"/>
    </reaction>
    <physiologicalReaction direction="left-to-right" evidence="2">
        <dbReference type="Rhea" id="RHEA:55861"/>
    </physiologicalReaction>
</comment>
<comment type="catalytic activity">
    <reaction evidence="2">
        <text>all-trans-retinoate + reduced [NADPH--hemoprotein reductase] + O2 = all-trans-4-hydroxyretinoate + oxidized [NADPH--hemoprotein reductase] + H2O + H(+)</text>
        <dbReference type="Rhea" id="RHEA:51984"/>
        <dbReference type="Rhea" id="RHEA-COMP:11964"/>
        <dbReference type="Rhea" id="RHEA-COMP:11965"/>
        <dbReference type="ChEBI" id="CHEBI:15377"/>
        <dbReference type="ChEBI" id="CHEBI:15378"/>
        <dbReference type="ChEBI" id="CHEBI:15379"/>
        <dbReference type="ChEBI" id="CHEBI:35291"/>
        <dbReference type="ChEBI" id="CHEBI:57618"/>
        <dbReference type="ChEBI" id="CHEBI:58210"/>
        <dbReference type="ChEBI" id="CHEBI:134178"/>
    </reaction>
    <physiologicalReaction direction="left-to-right" evidence="2">
        <dbReference type="Rhea" id="RHEA:51985"/>
    </physiologicalReaction>
</comment>
<comment type="catalytic activity">
    <reaction evidence="2">
        <text>(5S)-hydroperoxy-(6E,8Z,11Z,14Z)-eicosatetraenoate = 5-oxo-(6E,8Z,11Z,14Z)-eicosatetraenoate + H2O</text>
        <dbReference type="Rhea" id="RHEA:48632"/>
        <dbReference type="ChEBI" id="CHEBI:15377"/>
        <dbReference type="ChEBI" id="CHEBI:57450"/>
        <dbReference type="ChEBI" id="CHEBI:65342"/>
    </reaction>
    <physiologicalReaction direction="left-to-right" evidence="2">
        <dbReference type="Rhea" id="RHEA:48633"/>
    </physiologicalReaction>
</comment>
<comment type="catalytic activity">
    <reaction evidence="2">
        <text>(12S)-hydroperoxy-(5Z,8Z,10E,14Z)-eicosatetraenoate = 12-oxo-(5Z,8Z,10E,14Z)-eicosatetraenoate + H2O</text>
        <dbReference type="Rhea" id="RHEA:37947"/>
        <dbReference type="ChEBI" id="CHEBI:15377"/>
        <dbReference type="ChEBI" id="CHEBI:57444"/>
        <dbReference type="ChEBI" id="CHEBI:75231"/>
        <dbReference type="EC" id="4.2.1.152"/>
    </reaction>
    <physiologicalReaction direction="left-to-right" evidence="2">
        <dbReference type="Rhea" id="RHEA:37948"/>
    </physiologicalReaction>
</comment>
<comment type="catalytic activity">
    <reaction evidence="2">
        <text>(15S)-hydroperoxy-(5Z,8Z,11Z,13E)-eicosatetraenoate = 15-oxo-(5Z,8Z,11Z,13E)-eicosatetraenoate + H2O</text>
        <dbReference type="Rhea" id="RHEA:48636"/>
        <dbReference type="ChEBI" id="CHEBI:15377"/>
        <dbReference type="ChEBI" id="CHEBI:57410"/>
        <dbReference type="ChEBI" id="CHEBI:57446"/>
    </reaction>
    <physiologicalReaction direction="left-to-right" evidence="2">
        <dbReference type="Rhea" id="RHEA:48637"/>
    </physiologicalReaction>
</comment>
<comment type="catalytic activity">
    <reaction evidence="2">
        <text>prostaglandin H2 = thromboxane A2</text>
        <dbReference type="Rhea" id="RHEA:17137"/>
        <dbReference type="ChEBI" id="CHEBI:57405"/>
        <dbReference type="ChEBI" id="CHEBI:57445"/>
        <dbReference type="EC" id="5.3.99.5"/>
    </reaction>
    <physiologicalReaction direction="left-to-right" evidence="2">
        <dbReference type="Rhea" id="RHEA:17138"/>
    </physiologicalReaction>
</comment>
<comment type="catalytic activity">
    <reaction evidence="2">
        <text>prostaglandin H2 = (12S)-hydroxy-(5Z,8E,10E)-heptadecatrienoate + malonaldehyde</text>
        <dbReference type="Rhea" id="RHEA:48644"/>
        <dbReference type="ChEBI" id="CHEBI:57405"/>
        <dbReference type="ChEBI" id="CHEBI:90694"/>
        <dbReference type="ChEBI" id="CHEBI:566274"/>
    </reaction>
    <physiologicalReaction direction="left-to-right" evidence="2">
        <dbReference type="Rhea" id="RHEA:48645"/>
    </physiologicalReaction>
</comment>
<comment type="catalytic activity">
    <reaction evidence="2">
        <text>(13S)-hydroperoxy-(9Z,11E)-octadecadienoate = 13-oxo-(9Z,11E)-octadecadienoate + H2O</text>
        <dbReference type="Rhea" id="RHEA:48716"/>
        <dbReference type="ChEBI" id="CHEBI:15377"/>
        <dbReference type="ChEBI" id="CHEBI:57466"/>
        <dbReference type="ChEBI" id="CHEBI:90781"/>
    </reaction>
    <physiologicalReaction direction="left-to-right" evidence="2">
        <dbReference type="Rhea" id="RHEA:48717"/>
    </physiologicalReaction>
</comment>
<comment type="cofactor">
    <cofactor evidence="1">
        <name>heme</name>
        <dbReference type="ChEBI" id="CHEBI:30413"/>
    </cofactor>
</comment>
<comment type="pathway">
    <text evidence="2">Lipid metabolism; fatty acid metabolism.</text>
</comment>
<comment type="subcellular location">
    <subcellularLocation>
        <location evidence="2">Endoplasmic reticulum membrane</location>
        <topology evidence="2">Peripheral membrane protein</topology>
    </subcellularLocation>
    <subcellularLocation>
        <location evidence="2">Microsome membrane</location>
        <topology evidence="2">Peripheral membrane protein</topology>
    </subcellularLocation>
</comment>
<comment type="similarity">
    <text evidence="3">Belongs to the cytochrome P450 family.</text>
</comment>
<keyword id="KW-0256">Endoplasmic reticulum</keyword>
<keyword id="KW-0276">Fatty acid metabolism</keyword>
<keyword id="KW-0349">Heme</keyword>
<keyword id="KW-0408">Iron</keyword>
<keyword id="KW-0413">Isomerase</keyword>
<keyword id="KW-0443">Lipid metabolism</keyword>
<keyword id="KW-0456">Lyase</keyword>
<keyword id="KW-0472">Membrane</keyword>
<keyword id="KW-0479">Metal-binding</keyword>
<keyword id="KW-0492">Microsome</keyword>
<keyword id="KW-0503">Monooxygenase</keyword>
<keyword id="KW-0560">Oxidoreductase</keyword>
<keyword id="KW-1185">Reference proteome</keyword>
<name>CP2S1_MOUSE</name>
<feature type="chain" id="PRO_0000051781" description="Cytochrome P450 2S1">
    <location>
        <begin position="1"/>
        <end position="501"/>
    </location>
</feature>
<feature type="binding site" description="axial binding residue" evidence="1">
    <location>
        <position position="441"/>
    </location>
    <ligand>
        <name>heme</name>
        <dbReference type="ChEBI" id="CHEBI:30413"/>
    </ligand>
    <ligandPart>
        <name>Fe</name>
        <dbReference type="ChEBI" id="CHEBI:18248"/>
    </ligandPart>
</feature>
<protein>
    <recommendedName>
        <fullName>Cytochrome P450 2S1</fullName>
        <ecNumber evidence="2">1.14.14.-</ecNumber>
    </recommendedName>
    <alternativeName>
        <fullName>CYPIIS1</fullName>
    </alternativeName>
    <alternativeName>
        <fullName>Hydroperoxy icosatetraenoate dehydratase</fullName>
        <ecNumber evidence="2">4.2.1.152</ecNumber>
    </alternativeName>
    <alternativeName>
        <fullName>Thromboxane-A synthase</fullName>
        <ecNumber evidence="2">5.3.99.5</ecNumber>
    </alternativeName>
</protein>
<organism>
    <name type="scientific">Mus musculus</name>
    <name type="common">Mouse</name>
    <dbReference type="NCBI Taxonomy" id="10090"/>
    <lineage>
        <taxon>Eukaryota</taxon>
        <taxon>Metazoa</taxon>
        <taxon>Chordata</taxon>
        <taxon>Craniata</taxon>
        <taxon>Vertebrata</taxon>
        <taxon>Euteleostomi</taxon>
        <taxon>Mammalia</taxon>
        <taxon>Eutheria</taxon>
        <taxon>Euarchontoglires</taxon>
        <taxon>Glires</taxon>
        <taxon>Rodentia</taxon>
        <taxon>Myomorpha</taxon>
        <taxon>Muroidea</taxon>
        <taxon>Muridae</taxon>
        <taxon>Murinae</taxon>
        <taxon>Mus</taxon>
        <taxon>Mus</taxon>
    </lineage>
</organism>
<accession>Q9DBX6</accession>
<gene>
    <name type="primary">Cyp2s1</name>
</gene>
<proteinExistence type="evidence at protein level"/>